<name>XGPT_VIBA3</name>
<dbReference type="EC" id="2.4.2.-" evidence="1"/>
<dbReference type="EC" id="2.4.2.22" evidence="1"/>
<dbReference type="EMBL" id="FM954972">
    <property type="protein sequence ID" value="CAV19579.1"/>
    <property type="molecule type" value="Genomic_DNA"/>
</dbReference>
<dbReference type="SMR" id="B7VJB5"/>
<dbReference type="STRING" id="575788.VS_2420"/>
<dbReference type="KEGG" id="vsp:VS_2420"/>
<dbReference type="eggNOG" id="COG2236">
    <property type="taxonomic scope" value="Bacteria"/>
</dbReference>
<dbReference type="HOGENOM" id="CLU_080904_3_0_6"/>
<dbReference type="UniPathway" id="UPA00602">
    <property type="reaction ID" value="UER00658"/>
</dbReference>
<dbReference type="UniPathway" id="UPA00909">
    <property type="reaction ID" value="UER00887"/>
</dbReference>
<dbReference type="Proteomes" id="UP000009100">
    <property type="component" value="Chromosome 1"/>
</dbReference>
<dbReference type="GO" id="GO:0005829">
    <property type="term" value="C:cytosol"/>
    <property type="evidence" value="ECO:0007669"/>
    <property type="project" value="TreeGrafter"/>
</dbReference>
<dbReference type="GO" id="GO:0005886">
    <property type="term" value="C:plasma membrane"/>
    <property type="evidence" value="ECO:0007669"/>
    <property type="project" value="UniProtKB-SubCell"/>
</dbReference>
<dbReference type="GO" id="GO:0052657">
    <property type="term" value="F:guanine phosphoribosyltransferase activity"/>
    <property type="evidence" value="ECO:0007669"/>
    <property type="project" value="RHEA"/>
</dbReference>
<dbReference type="GO" id="GO:0004422">
    <property type="term" value="F:hypoxanthine phosphoribosyltransferase activity"/>
    <property type="evidence" value="ECO:0007669"/>
    <property type="project" value="RHEA"/>
</dbReference>
<dbReference type="GO" id="GO:0000287">
    <property type="term" value="F:magnesium ion binding"/>
    <property type="evidence" value="ECO:0007669"/>
    <property type="project" value="UniProtKB-UniRule"/>
</dbReference>
<dbReference type="GO" id="GO:0000310">
    <property type="term" value="F:xanthine phosphoribosyltransferase activity"/>
    <property type="evidence" value="ECO:0007669"/>
    <property type="project" value="UniProtKB-UniRule"/>
</dbReference>
<dbReference type="GO" id="GO:0032263">
    <property type="term" value="P:GMP salvage"/>
    <property type="evidence" value="ECO:0007669"/>
    <property type="project" value="UniProtKB-UniRule"/>
</dbReference>
<dbReference type="GO" id="GO:0032264">
    <property type="term" value="P:IMP salvage"/>
    <property type="evidence" value="ECO:0007669"/>
    <property type="project" value="TreeGrafter"/>
</dbReference>
<dbReference type="GO" id="GO:0006166">
    <property type="term" value="P:purine ribonucleoside salvage"/>
    <property type="evidence" value="ECO:0007669"/>
    <property type="project" value="UniProtKB-KW"/>
</dbReference>
<dbReference type="GO" id="GO:0032265">
    <property type="term" value="P:XMP salvage"/>
    <property type="evidence" value="ECO:0007669"/>
    <property type="project" value="UniProtKB-UniRule"/>
</dbReference>
<dbReference type="CDD" id="cd06223">
    <property type="entry name" value="PRTases_typeI"/>
    <property type="match status" value="1"/>
</dbReference>
<dbReference type="Gene3D" id="3.40.50.2020">
    <property type="match status" value="1"/>
</dbReference>
<dbReference type="HAMAP" id="MF_01903">
    <property type="entry name" value="XGPRT"/>
    <property type="match status" value="1"/>
</dbReference>
<dbReference type="InterPro" id="IPR000836">
    <property type="entry name" value="PRibTrfase_dom"/>
</dbReference>
<dbReference type="InterPro" id="IPR029057">
    <property type="entry name" value="PRTase-like"/>
</dbReference>
<dbReference type="InterPro" id="IPR023747">
    <property type="entry name" value="Xanthine_Guanine_PRibTrfase"/>
</dbReference>
<dbReference type="NCBIfam" id="NF006613">
    <property type="entry name" value="PRK09177.1"/>
    <property type="match status" value="1"/>
</dbReference>
<dbReference type="NCBIfam" id="NF000014">
    <property type="entry name" value="tet_prtrans_34"/>
    <property type="match status" value="1"/>
</dbReference>
<dbReference type="PANTHER" id="PTHR39563">
    <property type="entry name" value="XANTHINE PHOSPHORIBOSYLTRANSFERASE"/>
    <property type="match status" value="1"/>
</dbReference>
<dbReference type="PANTHER" id="PTHR39563:SF1">
    <property type="entry name" value="XANTHINE-GUANINE PHOSPHORIBOSYLTRANSFERASE"/>
    <property type="match status" value="1"/>
</dbReference>
<dbReference type="Pfam" id="PF00156">
    <property type="entry name" value="Pribosyltran"/>
    <property type="match status" value="1"/>
</dbReference>
<dbReference type="SUPFAM" id="SSF53271">
    <property type="entry name" value="PRTase-like"/>
    <property type="match status" value="1"/>
</dbReference>
<dbReference type="PROSITE" id="PS00103">
    <property type="entry name" value="PUR_PYR_PR_TRANSFER"/>
    <property type="match status" value="1"/>
</dbReference>
<gene>
    <name evidence="1" type="primary">gpt</name>
    <name type="ordered locus">VS_2420</name>
</gene>
<comment type="function">
    <text evidence="1">Purine salvage pathway enzyme that catalyzes the transfer of the ribosyl-5-phosphate group from 5-phospho-alpha-D-ribose 1-diphosphate (PRPP) to the N9 position of the 6-oxopurines guanine and xanthine to form the corresponding ribonucleotides GMP (guanosine 5'-monophosphate) and XMP (xanthosine 5'-monophosphate), with the release of PPi. To a lesser extent, also acts on hypoxanthine.</text>
</comment>
<comment type="catalytic activity">
    <reaction evidence="1">
        <text>GMP + diphosphate = guanine + 5-phospho-alpha-D-ribose 1-diphosphate</text>
        <dbReference type="Rhea" id="RHEA:25424"/>
        <dbReference type="ChEBI" id="CHEBI:16235"/>
        <dbReference type="ChEBI" id="CHEBI:33019"/>
        <dbReference type="ChEBI" id="CHEBI:58017"/>
        <dbReference type="ChEBI" id="CHEBI:58115"/>
    </reaction>
    <physiologicalReaction direction="right-to-left" evidence="1">
        <dbReference type="Rhea" id="RHEA:25426"/>
    </physiologicalReaction>
</comment>
<comment type="catalytic activity">
    <reaction evidence="1">
        <text>XMP + diphosphate = xanthine + 5-phospho-alpha-D-ribose 1-diphosphate</text>
        <dbReference type="Rhea" id="RHEA:10800"/>
        <dbReference type="ChEBI" id="CHEBI:17712"/>
        <dbReference type="ChEBI" id="CHEBI:33019"/>
        <dbReference type="ChEBI" id="CHEBI:57464"/>
        <dbReference type="ChEBI" id="CHEBI:58017"/>
        <dbReference type="EC" id="2.4.2.22"/>
    </reaction>
    <physiologicalReaction direction="right-to-left" evidence="1">
        <dbReference type="Rhea" id="RHEA:10802"/>
    </physiologicalReaction>
</comment>
<comment type="catalytic activity">
    <reaction evidence="1">
        <text>IMP + diphosphate = hypoxanthine + 5-phospho-alpha-D-ribose 1-diphosphate</text>
        <dbReference type="Rhea" id="RHEA:17973"/>
        <dbReference type="ChEBI" id="CHEBI:17368"/>
        <dbReference type="ChEBI" id="CHEBI:33019"/>
        <dbReference type="ChEBI" id="CHEBI:58017"/>
        <dbReference type="ChEBI" id="CHEBI:58053"/>
    </reaction>
    <physiologicalReaction direction="right-to-left" evidence="1">
        <dbReference type="Rhea" id="RHEA:17975"/>
    </physiologicalReaction>
</comment>
<comment type="cofactor">
    <cofactor evidence="1">
        <name>Mg(2+)</name>
        <dbReference type="ChEBI" id="CHEBI:18420"/>
    </cofactor>
</comment>
<comment type="pathway">
    <text evidence="1">Purine metabolism; GMP biosynthesis via salvage pathway; GMP from guanine: step 1/1.</text>
</comment>
<comment type="pathway">
    <text evidence="1">Purine metabolism; XMP biosynthesis via salvage pathway; XMP from xanthine: step 1/1.</text>
</comment>
<comment type="subunit">
    <text evidence="1">Homotetramer.</text>
</comment>
<comment type="subcellular location">
    <subcellularLocation>
        <location evidence="1">Cell inner membrane</location>
        <topology evidence="1">Peripheral membrane protein</topology>
    </subcellularLocation>
</comment>
<comment type="similarity">
    <text evidence="1">Belongs to the purine/pyrimidine phosphoribosyltransferase family. XGPT subfamily.</text>
</comment>
<protein>
    <recommendedName>
        <fullName evidence="1">Xanthine-guanine phosphoribosyltransferase</fullName>
        <shortName evidence="1">XGPRT</shortName>
        <ecNumber evidence="1">2.4.2.-</ecNumber>
        <ecNumber evidence="1">2.4.2.22</ecNumber>
    </recommendedName>
    <alternativeName>
        <fullName evidence="1">Xanthine phosphoribosyltransferase</fullName>
    </alternativeName>
</protein>
<sequence>MSNKFVITWDNMQTYCRQLAEKQMPAEQWKGIWAVSRGGLVPGAILARELGIRHVDTICISSYDHDHQRDMTVVKAPEGDGEGFLIVEDLVDSGDTARKLREMYPKAKLIAVCAKPSGADLLDEYIVDIAQDTWIEQPWDTSLSYVEPVNRKSK</sequence>
<feature type="chain" id="PRO_1000188763" description="Xanthine-guanine phosphoribosyltransferase">
    <location>
        <begin position="1"/>
        <end position="154"/>
    </location>
</feature>
<feature type="binding site" evidence="1">
    <location>
        <begin position="37"/>
        <end position="38"/>
    </location>
    <ligand>
        <name>5-phospho-alpha-D-ribose 1-diphosphate</name>
        <dbReference type="ChEBI" id="CHEBI:58017"/>
    </ligand>
</feature>
<feature type="binding site" evidence="1">
    <location>
        <position position="69"/>
    </location>
    <ligand>
        <name>5-phospho-alpha-D-ribose 1-diphosphate</name>
        <dbReference type="ChEBI" id="CHEBI:58017"/>
    </ligand>
</feature>
<feature type="binding site" evidence="1">
    <location>
        <position position="69"/>
    </location>
    <ligand>
        <name>GMP</name>
        <dbReference type="ChEBI" id="CHEBI:58115"/>
    </ligand>
</feature>
<feature type="binding site" evidence="1">
    <location>
        <begin position="88"/>
        <end position="96"/>
    </location>
    <ligand>
        <name>5-phospho-alpha-D-ribose 1-diphosphate</name>
        <dbReference type="ChEBI" id="CHEBI:58017"/>
    </ligand>
</feature>
<feature type="binding site" evidence="1">
    <location>
        <position position="89"/>
    </location>
    <ligand>
        <name>Mg(2+)</name>
        <dbReference type="ChEBI" id="CHEBI:18420"/>
    </ligand>
</feature>
<feature type="binding site" evidence="1">
    <location>
        <begin position="92"/>
        <end position="96"/>
    </location>
    <ligand>
        <name>GMP</name>
        <dbReference type="ChEBI" id="CHEBI:58115"/>
    </ligand>
</feature>
<feature type="binding site" evidence="1">
    <location>
        <position position="92"/>
    </location>
    <ligand>
        <name>guanine</name>
        <dbReference type="ChEBI" id="CHEBI:16235"/>
    </ligand>
</feature>
<feature type="binding site" evidence="1">
    <location>
        <position position="92"/>
    </location>
    <ligand>
        <name>xanthine</name>
        <dbReference type="ChEBI" id="CHEBI:17712"/>
    </ligand>
</feature>
<feature type="binding site" evidence="1">
    <location>
        <begin position="134"/>
        <end position="135"/>
    </location>
    <ligand>
        <name>GMP</name>
        <dbReference type="ChEBI" id="CHEBI:58115"/>
    </ligand>
</feature>
<feature type="binding site" evidence="1">
    <location>
        <position position="135"/>
    </location>
    <ligand>
        <name>guanine</name>
        <dbReference type="ChEBI" id="CHEBI:16235"/>
    </ligand>
</feature>
<feature type="binding site" evidence="1">
    <location>
        <position position="135"/>
    </location>
    <ligand>
        <name>xanthine</name>
        <dbReference type="ChEBI" id="CHEBI:17712"/>
    </ligand>
</feature>
<proteinExistence type="inferred from homology"/>
<accession>B7VJB5</accession>
<keyword id="KW-0997">Cell inner membrane</keyword>
<keyword id="KW-1003">Cell membrane</keyword>
<keyword id="KW-0328">Glycosyltransferase</keyword>
<keyword id="KW-0460">Magnesium</keyword>
<keyword id="KW-0472">Membrane</keyword>
<keyword id="KW-0479">Metal-binding</keyword>
<keyword id="KW-0660">Purine salvage</keyword>
<keyword id="KW-0808">Transferase</keyword>
<evidence type="ECO:0000255" key="1">
    <source>
        <dbReference type="HAMAP-Rule" id="MF_01903"/>
    </source>
</evidence>
<reference key="1">
    <citation type="submission" date="2009-02" db="EMBL/GenBank/DDBJ databases">
        <title>Vibrio splendidus str. LGP32 complete genome.</title>
        <authorList>
            <person name="Mazel D."/>
            <person name="Le Roux F."/>
        </authorList>
    </citation>
    <scope>NUCLEOTIDE SEQUENCE [LARGE SCALE GENOMIC DNA]</scope>
    <source>
        <strain>LGP32</strain>
    </source>
</reference>
<organism>
    <name type="scientific">Vibrio atlanticus (strain LGP32)</name>
    <name type="common">Vibrio splendidus (strain Mel32)</name>
    <dbReference type="NCBI Taxonomy" id="575788"/>
    <lineage>
        <taxon>Bacteria</taxon>
        <taxon>Pseudomonadati</taxon>
        <taxon>Pseudomonadota</taxon>
        <taxon>Gammaproteobacteria</taxon>
        <taxon>Vibrionales</taxon>
        <taxon>Vibrionaceae</taxon>
        <taxon>Vibrio</taxon>
    </lineage>
</organism>